<name>PROB_CROS8</name>
<feature type="chain" id="PRO_1000081061" description="Glutamate 5-kinase">
    <location>
        <begin position="1"/>
        <end position="367"/>
    </location>
</feature>
<feature type="domain" description="PUA" evidence="1">
    <location>
        <begin position="275"/>
        <end position="353"/>
    </location>
</feature>
<feature type="binding site" evidence="1">
    <location>
        <position position="10"/>
    </location>
    <ligand>
        <name>ATP</name>
        <dbReference type="ChEBI" id="CHEBI:30616"/>
    </ligand>
</feature>
<feature type="binding site" evidence="1">
    <location>
        <position position="50"/>
    </location>
    <ligand>
        <name>substrate</name>
    </ligand>
</feature>
<feature type="binding site" evidence="1">
    <location>
        <position position="137"/>
    </location>
    <ligand>
        <name>substrate</name>
    </ligand>
</feature>
<feature type="binding site" evidence="1">
    <location>
        <position position="149"/>
    </location>
    <ligand>
        <name>substrate</name>
    </ligand>
</feature>
<feature type="binding site" evidence="1">
    <location>
        <begin position="169"/>
        <end position="170"/>
    </location>
    <ligand>
        <name>ATP</name>
        <dbReference type="ChEBI" id="CHEBI:30616"/>
    </ligand>
</feature>
<feature type="binding site" evidence="1">
    <location>
        <begin position="211"/>
        <end position="217"/>
    </location>
    <ligand>
        <name>ATP</name>
        <dbReference type="ChEBI" id="CHEBI:30616"/>
    </ligand>
</feature>
<protein>
    <recommendedName>
        <fullName evidence="1">Glutamate 5-kinase</fullName>
        <ecNumber evidence="1">2.7.2.11</ecNumber>
    </recommendedName>
    <alternativeName>
        <fullName evidence="1">Gamma-glutamyl kinase</fullName>
        <shortName evidence="1">GK</shortName>
    </alternativeName>
</protein>
<keyword id="KW-0028">Amino-acid biosynthesis</keyword>
<keyword id="KW-0067">ATP-binding</keyword>
<keyword id="KW-0963">Cytoplasm</keyword>
<keyword id="KW-0418">Kinase</keyword>
<keyword id="KW-0547">Nucleotide-binding</keyword>
<keyword id="KW-0641">Proline biosynthesis</keyword>
<keyword id="KW-1185">Reference proteome</keyword>
<keyword id="KW-0808">Transferase</keyword>
<proteinExistence type="inferred from homology"/>
<organism>
    <name type="scientific">Cronobacter sakazakii (strain ATCC BAA-894)</name>
    <name type="common">Enterobacter sakazakii</name>
    <dbReference type="NCBI Taxonomy" id="290339"/>
    <lineage>
        <taxon>Bacteria</taxon>
        <taxon>Pseudomonadati</taxon>
        <taxon>Pseudomonadota</taxon>
        <taxon>Gammaproteobacteria</taxon>
        <taxon>Enterobacterales</taxon>
        <taxon>Enterobacteriaceae</taxon>
        <taxon>Cronobacter</taxon>
    </lineage>
</organism>
<gene>
    <name evidence="1" type="primary">proB</name>
    <name type="ordered locus">ESA_03110</name>
</gene>
<evidence type="ECO:0000255" key="1">
    <source>
        <dbReference type="HAMAP-Rule" id="MF_00456"/>
    </source>
</evidence>
<reference key="1">
    <citation type="journal article" date="2010" name="PLoS ONE">
        <title>Genome sequence of Cronobacter sakazakii BAA-894 and comparative genomic hybridization analysis with other Cronobacter species.</title>
        <authorList>
            <person name="Kucerova E."/>
            <person name="Clifton S.W."/>
            <person name="Xia X.Q."/>
            <person name="Long F."/>
            <person name="Porwollik S."/>
            <person name="Fulton L."/>
            <person name="Fronick C."/>
            <person name="Minx P."/>
            <person name="Kyung K."/>
            <person name="Warren W."/>
            <person name="Fulton R."/>
            <person name="Feng D."/>
            <person name="Wollam A."/>
            <person name="Shah N."/>
            <person name="Bhonagiri V."/>
            <person name="Nash W.E."/>
            <person name="Hallsworth-Pepin K."/>
            <person name="Wilson R.K."/>
            <person name="McClelland M."/>
            <person name="Forsythe S.J."/>
        </authorList>
    </citation>
    <scope>NUCLEOTIDE SEQUENCE [LARGE SCALE GENOMIC DNA]</scope>
    <source>
        <strain>ATCC BAA-894</strain>
    </source>
</reference>
<accession>A7MI52</accession>
<sequence>MSNSQTLVVKLGTSVLTGGSRRLNRAHIVELVRQCAQQHAAGHRIVIVTSGAIAAGREHLGYPELPATIASKQLLAAVGQSRLIQLWEQLFSIYGIHVGQMLLTRADMEDRERFLNARDTLTALLDNRIVPVINENDAVATAEIKVGDNDNLSALAAILAGADKLLLLTDQQGLFTADPRNNPQAELIQDVYGIDDTLRAIAGDSVSGLGTGGMGTKLQAADVAGRAGIETVIAAGSKPGVINDVIEGLPVGTRFHPQQTPLENRKRWIFGAPPAGEITVDEGAQSAILERGSSLLPKGIKSVTGNFSRGEVIRIRNLEGRDIAHGVSRYNSDALRRIAGHHSQQIDAILGYEYGPVAVHRDDMITQ</sequence>
<comment type="function">
    <text evidence="1">Catalyzes the transfer of a phosphate group to glutamate to form L-glutamate 5-phosphate.</text>
</comment>
<comment type="catalytic activity">
    <reaction evidence="1">
        <text>L-glutamate + ATP = L-glutamyl 5-phosphate + ADP</text>
        <dbReference type="Rhea" id="RHEA:14877"/>
        <dbReference type="ChEBI" id="CHEBI:29985"/>
        <dbReference type="ChEBI" id="CHEBI:30616"/>
        <dbReference type="ChEBI" id="CHEBI:58274"/>
        <dbReference type="ChEBI" id="CHEBI:456216"/>
        <dbReference type="EC" id="2.7.2.11"/>
    </reaction>
</comment>
<comment type="pathway">
    <text evidence="1">Amino-acid biosynthesis; L-proline biosynthesis; L-glutamate 5-semialdehyde from L-glutamate: step 1/2.</text>
</comment>
<comment type="subcellular location">
    <subcellularLocation>
        <location evidence="1">Cytoplasm</location>
    </subcellularLocation>
</comment>
<comment type="similarity">
    <text evidence="1">Belongs to the glutamate 5-kinase family.</text>
</comment>
<dbReference type="EC" id="2.7.2.11" evidence="1"/>
<dbReference type="EMBL" id="CP000783">
    <property type="protein sequence ID" value="ABU78338.1"/>
    <property type="molecule type" value="Genomic_DNA"/>
</dbReference>
<dbReference type="RefSeq" id="WP_004385346.1">
    <property type="nucleotide sequence ID" value="NC_009778.1"/>
</dbReference>
<dbReference type="SMR" id="A7MI52"/>
<dbReference type="GeneID" id="92807542"/>
<dbReference type="KEGG" id="esa:ESA_03110"/>
<dbReference type="HOGENOM" id="CLU_025400_2_0_6"/>
<dbReference type="UniPathway" id="UPA00098">
    <property type="reaction ID" value="UER00359"/>
</dbReference>
<dbReference type="Proteomes" id="UP000000260">
    <property type="component" value="Chromosome"/>
</dbReference>
<dbReference type="GO" id="GO:0005829">
    <property type="term" value="C:cytosol"/>
    <property type="evidence" value="ECO:0007669"/>
    <property type="project" value="TreeGrafter"/>
</dbReference>
<dbReference type="GO" id="GO:0005524">
    <property type="term" value="F:ATP binding"/>
    <property type="evidence" value="ECO:0007669"/>
    <property type="project" value="UniProtKB-KW"/>
</dbReference>
<dbReference type="GO" id="GO:0004349">
    <property type="term" value="F:glutamate 5-kinase activity"/>
    <property type="evidence" value="ECO:0007669"/>
    <property type="project" value="UniProtKB-UniRule"/>
</dbReference>
<dbReference type="GO" id="GO:0003723">
    <property type="term" value="F:RNA binding"/>
    <property type="evidence" value="ECO:0007669"/>
    <property type="project" value="InterPro"/>
</dbReference>
<dbReference type="GO" id="GO:0055129">
    <property type="term" value="P:L-proline biosynthetic process"/>
    <property type="evidence" value="ECO:0007669"/>
    <property type="project" value="UniProtKB-UniRule"/>
</dbReference>
<dbReference type="CDD" id="cd04242">
    <property type="entry name" value="AAK_G5K_ProB"/>
    <property type="match status" value="1"/>
</dbReference>
<dbReference type="CDD" id="cd21157">
    <property type="entry name" value="PUA_G5K"/>
    <property type="match status" value="1"/>
</dbReference>
<dbReference type="FunFam" id="2.30.130.10:FF:000003">
    <property type="entry name" value="Glutamate 5-kinase"/>
    <property type="match status" value="1"/>
</dbReference>
<dbReference type="FunFam" id="3.40.1160.10:FF:000006">
    <property type="entry name" value="Glutamate 5-kinase"/>
    <property type="match status" value="1"/>
</dbReference>
<dbReference type="Gene3D" id="3.40.1160.10">
    <property type="entry name" value="Acetylglutamate kinase-like"/>
    <property type="match status" value="2"/>
</dbReference>
<dbReference type="Gene3D" id="2.30.130.10">
    <property type="entry name" value="PUA domain"/>
    <property type="match status" value="1"/>
</dbReference>
<dbReference type="HAMAP" id="MF_00456">
    <property type="entry name" value="ProB"/>
    <property type="match status" value="1"/>
</dbReference>
<dbReference type="InterPro" id="IPR036393">
    <property type="entry name" value="AceGlu_kinase-like_sf"/>
</dbReference>
<dbReference type="InterPro" id="IPR001048">
    <property type="entry name" value="Asp/Glu/Uridylate_kinase"/>
</dbReference>
<dbReference type="InterPro" id="IPR041739">
    <property type="entry name" value="G5K_ProB"/>
</dbReference>
<dbReference type="InterPro" id="IPR001057">
    <property type="entry name" value="Glu/AcGlu_kinase"/>
</dbReference>
<dbReference type="InterPro" id="IPR011529">
    <property type="entry name" value="Glu_5kinase"/>
</dbReference>
<dbReference type="InterPro" id="IPR005715">
    <property type="entry name" value="Glu_5kinase/COase_Synthase"/>
</dbReference>
<dbReference type="InterPro" id="IPR019797">
    <property type="entry name" value="Glutamate_5-kinase_CS"/>
</dbReference>
<dbReference type="InterPro" id="IPR002478">
    <property type="entry name" value="PUA"/>
</dbReference>
<dbReference type="InterPro" id="IPR015947">
    <property type="entry name" value="PUA-like_sf"/>
</dbReference>
<dbReference type="InterPro" id="IPR036974">
    <property type="entry name" value="PUA_sf"/>
</dbReference>
<dbReference type="NCBIfam" id="TIGR01027">
    <property type="entry name" value="proB"/>
    <property type="match status" value="1"/>
</dbReference>
<dbReference type="PANTHER" id="PTHR43654">
    <property type="entry name" value="GLUTAMATE 5-KINASE"/>
    <property type="match status" value="1"/>
</dbReference>
<dbReference type="PANTHER" id="PTHR43654:SF1">
    <property type="entry name" value="ISOPENTENYL PHOSPHATE KINASE"/>
    <property type="match status" value="1"/>
</dbReference>
<dbReference type="Pfam" id="PF00696">
    <property type="entry name" value="AA_kinase"/>
    <property type="match status" value="1"/>
</dbReference>
<dbReference type="Pfam" id="PF01472">
    <property type="entry name" value="PUA"/>
    <property type="match status" value="1"/>
</dbReference>
<dbReference type="PIRSF" id="PIRSF000729">
    <property type="entry name" value="GK"/>
    <property type="match status" value="1"/>
</dbReference>
<dbReference type="PRINTS" id="PR00474">
    <property type="entry name" value="GLU5KINASE"/>
</dbReference>
<dbReference type="SMART" id="SM00359">
    <property type="entry name" value="PUA"/>
    <property type="match status" value="1"/>
</dbReference>
<dbReference type="SUPFAM" id="SSF53633">
    <property type="entry name" value="Carbamate kinase-like"/>
    <property type="match status" value="1"/>
</dbReference>
<dbReference type="SUPFAM" id="SSF88697">
    <property type="entry name" value="PUA domain-like"/>
    <property type="match status" value="1"/>
</dbReference>
<dbReference type="PROSITE" id="PS00902">
    <property type="entry name" value="GLUTAMATE_5_KINASE"/>
    <property type="match status" value="1"/>
</dbReference>
<dbReference type="PROSITE" id="PS50890">
    <property type="entry name" value="PUA"/>
    <property type="match status" value="1"/>
</dbReference>